<evidence type="ECO:0000255" key="1"/>
<evidence type="ECO:0000269" key="2">
    <source>
    </source>
</evidence>
<evidence type="ECO:0000303" key="3">
    <source>
    </source>
</evidence>
<evidence type="ECO:0000305" key="4"/>
<evidence type="ECO:0000305" key="5">
    <source>
    </source>
</evidence>
<dbReference type="EMBL" id="MG686572">
    <property type="protein sequence ID" value="AYE92116.1"/>
    <property type="molecule type" value="mRNA"/>
</dbReference>
<dbReference type="SMR" id="A0A3B7TLI7"/>
<dbReference type="VEuPathDB" id="FungiDB:CCR75_008983"/>
<dbReference type="GO" id="GO:0005576">
    <property type="term" value="C:extracellular region"/>
    <property type="evidence" value="ECO:0007669"/>
    <property type="project" value="UniProtKB-SubCell"/>
</dbReference>
<dbReference type="GO" id="GO:0020002">
    <property type="term" value="C:host cell plasma membrane"/>
    <property type="evidence" value="ECO:0007669"/>
    <property type="project" value="UniProtKB-SubCell"/>
</dbReference>
<dbReference type="GO" id="GO:0016020">
    <property type="term" value="C:membrane"/>
    <property type="evidence" value="ECO:0007669"/>
    <property type="project" value="UniProtKB-KW"/>
</dbReference>
<name>BLR40_BRELC</name>
<keyword id="KW-1032">Host cell membrane</keyword>
<keyword id="KW-1043">Host membrane</keyword>
<keyword id="KW-0472">Membrane</keyword>
<keyword id="KW-0964">Secreted</keyword>
<keyword id="KW-0732">Signal</keyword>
<feature type="signal peptide" evidence="1">
    <location>
        <begin position="1"/>
        <end position="22"/>
    </location>
</feature>
<feature type="chain" id="PRO_5017738820" description="RxLR effector protein BLR40">
    <location>
        <begin position="23"/>
        <end position="145"/>
    </location>
</feature>
<feature type="short sequence motif" description="RxLR-dEER" evidence="5">
    <location>
        <begin position="44"/>
        <end position="58"/>
    </location>
</feature>
<accession>A0A3B7TLI7</accession>
<organism>
    <name type="scientific">Bremia lactucae</name>
    <name type="common">Lettuce downy mildew</name>
    <dbReference type="NCBI Taxonomy" id="4779"/>
    <lineage>
        <taxon>Eukaryota</taxon>
        <taxon>Sar</taxon>
        <taxon>Stramenopiles</taxon>
        <taxon>Oomycota</taxon>
        <taxon>Peronosporales</taxon>
        <taxon>Peronosporaceae</taxon>
        <taxon>Bremia</taxon>
    </lineage>
</organism>
<gene>
    <name evidence="3" type="primary">BLR40</name>
</gene>
<comment type="function">
    <text evidence="2">Secreted effector that triggers a robust hypersensitive response (HR) in Lactuca sativa cv. Design that is resistant to multiple B.lactucae races, including Bl:24.</text>
</comment>
<comment type="subcellular location">
    <subcellularLocation>
        <location evidence="2">Secreted</location>
    </subcellularLocation>
    <subcellularLocation>
        <location evidence="2">Host cell membrane</location>
    </subcellularLocation>
</comment>
<comment type="domain">
    <text evidence="5">The RxLR-dEER motif acts to carry the protein into the host cell cytoplasm through binding to cell surface phosphatidylinositol-3-phosphate.</text>
</comment>
<comment type="similarity">
    <text evidence="4">Belongs to the RxLR effector family.</text>
</comment>
<sequence>MLLSRAISVVALLACICCGVHTQDSKADLGTLRTTDSAIITSQRRLRTSVDLVDNEERFRWPFQQFFKDRWHRKQIKTYFRDQKDNVSEGLVEQLIARHGLKNVEKVLSEVKFPLAVQISIRKILVNYKGKQAFTRPHLTPADTL</sequence>
<proteinExistence type="evidence at transcript level"/>
<protein>
    <recommendedName>
        <fullName evidence="3">RxLR effector protein BLR40</fullName>
    </recommendedName>
</protein>
<reference key="1">
    <citation type="journal article" date="2019" name="Mol. Plant Pathol.">
        <title>Recognition of lettuce downy mildew effector BLR38 in Lactuca serriola LS102 requires two unlinked loci.</title>
        <authorList>
            <person name="Pelgrom A.J.E."/>
            <person name="Eikelhof J."/>
            <person name="Elberse J."/>
            <person name="Meisrimler C.N."/>
            <person name="Raedts R."/>
            <person name="Klein J."/>
            <person name="Van den Ackerveken G."/>
        </authorList>
    </citation>
    <scope>NUCLEOTIDE SEQUENCE [MRNA]</scope>
    <scope>DOMAIN</scope>
    <scope>FUNCTION</scope>
    <source>
        <strain>Race Bl:24</strain>
    </source>
</reference>